<evidence type="ECO:0000250" key="1"/>
<evidence type="ECO:0000255" key="2"/>
<evidence type="ECO:0000269" key="3">
    <source>
    </source>
</evidence>
<evidence type="ECO:0000305" key="4"/>
<reference key="1">
    <citation type="journal article" date="2002" name="Nature">
        <title>The genome sequence of Schizosaccharomyces pombe.</title>
        <authorList>
            <person name="Wood V."/>
            <person name="Gwilliam R."/>
            <person name="Rajandream M.A."/>
            <person name="Lyne M.H."/>
            <person name="Lyne R."/>
            <person name="Stewart A."/>
            <person name="Sgouros J.G."/>
            <person name="Peat N."/>
            <person name="Hayles J."/>
            <person name="Baker S.G."/>
            <person name="Basham D."/>
            <person name="Bowman S."/>
            <person name="Brooks K."/>
            <person name="Brown D."/>
            <person name="Brown S."/>
            <person name="Chillingworth T."/>
            <person name="Churcher C.M."/>
            <person name="Collins M."/>
            <person name="Connor R."/>
            <person name="Cronin A."/>
            <person name="Davis P."/>
            <person name="Feltwell T."/>
            <person name="Fraser A."/>
            <person name="Gentles S."/>
            <person name="Goble A."/>
            <person name="Hamlin N."/>
            <person name="Harris D.E."/>
            <person name="Hidalgo J."/>
            <person name="Hodgson G."/>
            <person name="Holroyd S."/>
            <person name="Hornsby T."/>
            <person name="Howarth S."/>
            <person name="Huckle E.J."/>
            <person name="Hunt S."/>
            <person name="Jagels K."/>
            <person name="James K.D."/>
            <person name="Jones L."/>
            <person name="Jones M."/>
            <person name="Leather S."/>
            <person name="McDonald S."/>
            <person name="McLean J."/>
            <person name="Mooney P."/>
            <person name="Moule S."/>
            <person name="Mungall K.L."/>
            <person name="Murphy L.D."/>
            <person name="Niblett D."/>
            <person name="Odell C."/>
            <person name="Oliver K."/>
            <person name="O'Neil S."/>
            <person name="Pearson D."/>
            <person name="Quail M.A."/>
            <person name="Rabbinowitsch E."/>
            <person name="Rutherford K.M."/>
            <person name="Rutter S."/>
            <person name="Saunders D."/>
            <person name="Seeger K."/>
            <person name="Sharp S."/>
            <person name="Skelton J."/>
            <person name="Simmonds M.N."/>
            <person name="Squares R."/>
            <person name="Squares S."/>
            <person name="Stevens K."/>
            <person name="Taylor K."/>
            <person name="Taylor R.G."/>
            <person name="Tivey A."/>
            <person name="Walsh S.V."/>
            <person name="Warren T."/>
            <person name="Whitehead S."/>
            <person name="Woodward J.R."/>
            <person name="Volckaert G."/>
            <person name="Aert R."/>
            <person name="Robben J."/>
            <person name="Grymonprez B."/>
            <person name="Weltjens I."/>
            <person name="Vanstreels E."/>
            <person name="Rieger M."/>
            <person name="Schaefer M."/>
            <person name="Mueller-Auer S."/>
            <person name="Gabel C."/>
            <person name="Fuchs M."/>
            <person name="Duesterhoeft A."/>
            <person name="Fritzc C."/>
            <person name="Holzer E."/>
            <person name="Moestl D."/>
            <person name="Hilbert H."/>
            <person name="Borzym K."/>
            <person name="Langer I."/>
            <person name="Beck A."/>
            <person name="Lehrach H."/>
            <person name="Reinhardt R."/>
            <person name="Pohl T.M."/>
            <person name="Eger P."/>
            <person name="Zimmermann W."/>
            <person name="Wedler H."/>
            <person name="Wambutt R."/>
            <person name="Purnelle B."/>
            <person name="Goffeau A."/>
            <person name="Cadieu E."/>
            <person name="Dreano S."/>
            <person name="Gloux S."/>
            <person name="Lelaure V."/>
            <person name="Mottier S."/>
            <person name="Galibert F."/>
            <person name="Aves S.J."/>
            <person name="Xiang Z."/>
            <person name="Hunt C."/>
            <person name="Moore K."/>
            <person name="Hurst S.M."/>
            <person name="Lucas M."/>
            <person name="Rochet M."/>
            <person name="Gaillardin C."/>
            <person name="Tallada V.A."/>
            <person name="Garzon A."/>
            <person name="Thode G."/>
            <person name="Daga R.R."/>
            <person name="Cruzado L."/>
            <person name="Jimenez J."/>
            <person name="Sanchez M."/>
            <person name="del Rey F."/>
            <person name="Benito J."/>
            <person name="Dominguez A."/>
            <person name="Revuelta J.L."/>
            <person name="Moreno S."/>
            <person name="Armstrong J."/>
            <person name="Forsburg S.L."/>
            <person name="Cerutti L."/>
            <person name="Lowe T."/>
            <person name="McCombie W.R."/>
            <person name="Paulsen I."/>
            <person name="Potashkin J."/>
            <person name="Shpakovski G.V."/>
            <person name="Ussery D."/>
            <person name="Barrell B.G."/>
            <person name="Nurse P."/>
        </authorList>
    </citation>
    <scope>NUCLEOTIDE SEQUENCE [LARGE SCALE GENOMIC DNA]</scope>
    <source>
        <strain>972 / ATCC 24843</strain>
    </source>
</reference>
<reference key="2">
    <citation type="journal article" date="2006" name="Nat. Biotechnol.">
        <title>ORFeome cloning and global analysis of protein localization in the fission yeast Schizosaccharomyces pombe.</title>
        <authorList>
            <person name="Matsuyama A."/>
            <person name="Arai R."/>
            <person name="Yashiroda Y."/>
            <person name="Shirai A."/>
            <person name="Kamata A."/>
            <person name="Sekido S."/>
            <person name="Kobayashi Y."/>
            <person name="Hashimoto A."/>
            <person name="Hamamoto M."/>
            <person name="Hiraoka Y."/>
            <person name="Horinouchi S."/>
            <person name="Yoshida M."/>
        </authorList>
    </citation>
    <scope>SUBCELLULAR LOCATION [LARGE SCALE ANALYSIS]</scope>
</reference>
<name>PIGS_SCHPO</name>
<gene>
    <name type="primary">gpi17</name>
    <name type="ORF">SPAC1F12.09</name>
</gene>
<feature type="chain" id="PRO_0000218607" description="GPI transamidase component PIG-S homolog">
    <location>
        <begin position="1"/>
        <end position="554"/>
    </location>
</feature>
<feature type="topological domain" description="Cytoplasmic" evidence="2">
    <location>
        <begin position="1"/>
        <end position="73"/>
    </location>
</feature>
<feature type="transmembrane region" description="Helical" evidence="2">
    <location>
        <begin position="74"/>
        <end position="94"/>
    </location>
</feature>
<feature type="topological domain" description="Lumenal" evidence="2">
    <location>
        <begin position="95"/>
        <end position="511"/>
    </location>
</feature>
<feature type="transmembrane region" description="Helical" evidence="2">
    <location>
        <begin position="512"/>
        <end position="532"/>
    </location>
</feature>
<feature type="topological domain" description="Cytoplasmic" evidence="2">
    <location>
        <begin position="533"/>
        <end position="554"/>
    </location>
</feature>
<feature type="glycosylation site" description="N-linked (GlcNAc...) asparagine" evidence="2">
    <location>
        <position position="132"/>
    </location>
</feature>
<feature type="glycosylation site" description="N-linked (GlcNAc...) asparagine" evidence="2">
    <location>
        <position position="375"/>
    </location>
</feature>
<keyword id="KW-0256">Endoplasmic reticulum</keyword>
<keyword id="KW-0325">Glycoprotein</keyword>
<keyword id="KW-0337">GPI-anchor biosynthesis</keyword>
<keyword id="KW-0472">Membrane</keyword>
<keyword id="KW-1185">Reference proteome</keyword>
<keyword id="KW-0812">Transmembrane</keyword>
<keyword id="KW-1133">Transmembrane helix</keyword>
<sequence>MSPCKWLTMFLKGCWGKIANMNHLDSCFPLRYIIGRKKASKLLCTMDSGLKSDSHEVERSNFQLNKPEKSLKRYALLSFYVIILLAIPVWWKTTHYERSSLPFEDMENAPSTVQTHLRFSPTFRILDDKGNNLTKEVQKVLEAEPQIYSYNLKVLEDDPVDYRIVLRESTDLQWFWDENNFIIDTPSKGPSELAILIVNCLWEAFSPQVMEVWSKFTRFSSTVEPSRAETKRTVQFSPQYRVLLSLLVGEGNHEPINWDIENAIQKYFNPLIEQLASLAKLNIETQIQYFVEDAEAYIKDDKFCTKHADLPNLVNNFEKYLSFSPHIREPTIHFVLYVPSPQIQPLWLENEDSNIIPTNSMLLPQWGSITTINFNVTEKKLLHDVDLKDYFRVISRDLLLLLGINDVPVSSLSATLADRLLRQRIAESCIEASDTLQNLAKLVHSMQSMAVPKEIQMYVKDTLLSLDMAYKALSQNNLNEALSYSNNAFSKSQEALFHPSMVTTIYFPDESKYGIYAPLFAPILIPLLISFIKEVKDMLRERKLHRVANVPKPN</sequence>
<organism>
    <name type="scientific">Schizosaccharomyces pombe (strain 972 / ATCC 24843)</name>
    <name type="common">Fission yeast</name>
    <dbReference type="NCBI Taxonomy" id="284812"/>
    <lineage>
        <taxon>Eukaryota</taxon>
        <taxon>Fungi</taxon>
        <taxon>Dikarya</taxon>
        <taxon>Ascomycota</taxon>
        <taxon>Taphrinomycotina</taxon>
        <taxon>Schizosaccharomycetes</taxon>
        <taxon>Schizosaccharomycetales</taxon>
        <taxon>Schizosaccharomycetaceae</taxon>
        <taxon>Schizosaccharomyces</taxon>
    </lineage>
</organism>
<protein>
    <recommendedName>
        <fullName>GPI transamidase component PIG-S homolog</fullName>
    </recommendedName>
</protein>
<proteinExistence type="inferred from homology"/>
<accession>Q10351</accession>
<dbReference type="EMBL" id="CU329670">
    <property type="protein sequence ID" value="CAA93813.1"/>
    <property type="molecule type" value="Genomic_DNA"/>
</dbReference>
<dbReference type="PIR" id="S67452">
    <property type="entry name" value="S67452"/>
</dbReference>
<dbReference type="RefSeq" id="NP_594335.1">
    <property type="nucleotide sequence ID" value="NM_001019756.2"/>
</dbReference>
<dbReference type="SMR" id="Q10351"/>
<dbReference type="ComplexPortal" id="CPX-10141">
    <property type="entry name" value="GPI-anchor transamidase complex"/>
</dbReference>
<dbReference type="FunCoup" id="Q10351">
    <property type="interactions" value="640"/>
</dbReference>
<dbReference type="STRING" id="284812.Q10351"/>
<dbReference type="GlyCosmos" id="Q10351">
    <property type="glycosylation" value="2 sites, No reported glycans"/>
</dbReference>
<dbReference type="PaxDb" id="4896-SPAC1F12.09.1"/>
<dbReference type="EnsemblFungi" id="SPAC1F12.09.1">
    <property type="protein sequence ID" value="SPAC1F12.09.1:pep"/>
    <property type="gene ID" value="SPAC1F12.09"/>
</dbReference>
<dbReference type="GeneID" id="2542284"/>
<dbReference type="KEGG" id="spo:2542284"/>
<dbReference type="PomBase" id="SPAC1F12.09">
    <property type="gene designation" value="gpi17"/>
</dbReference>
<dbReference type="VEuPathDB" id="FungiDB:SPAC1F12.09"/>
<dbReference type="eggNOG" id="KOG2459">
    <property type="taxonomic scope" value="Eukaryota"/>
</dbReference>
<dbReference type="HOGENOM" id="CLU_010026_3_1_1"/>
<dbReference type="InParanoid" id="Q10351"/>
<dbReference type="OMA" id="AEHKYAV"/>
<dbReference type="PhylomeDB" id="Q10351"/>
<dbReference type="UniPathway" id="UPA00196"/>
<dbReference type="PRO" id="PR:Q10351"/>
<dbReference type="Proteomes" id="UP000002485">
    <property type="component" value="Chromosome I"/>
</dbReference>
<dbReference type="GO" id="GO:0005783">
    <property type="term" value="C:endoplasmic reticulum"/>
    <property type="evidence" value="ECO:0007005"/>
    <property type="project" value="PomBase"/>
</dbReference>
<dbReference type="GO" id="GO:0042765">
    <property type="term" value="C:GPI-anchor transamidase complex"/>
    <property type="evidence" value="ECO:0000318"/>
    <property type="project" value="GO_Central"/>
</dbReference>
<dbReference type="GO" id="GO:0016255">
    <property type="term" value="P:attachment of GPI anchor to protein"/>
    <property type="evidence" value="ECO:0000318"/>
    <property type="project" value="GO_Central"/>
</dbReference>
<dbReference type="GO" id="GO:0006506">
    <property type="term" value="P:GPI anchor biosynthetic process"/>
    <property type="evidence" value="ECO:0007669"/>
    <property type="project" value="UniProtKB-UniPathway"/>
</dbReference>
<dbReference type="InterPro" id="IPR019540">
    <property type="entry name" value="PtdIno-glycan_biosynth_class_S"/>
</dbReference>
<dbReference type="PANTHER" id="PTHR21072">
    <property type="entry name" value="GPI TRANSAMIDASE COMPONENT PIG-S"/>
    <property type="match status" value="1"/>
</dbReference>
<dbReference type="PANTHER" id="PTHR21072:SF13">
    <property type="entry name" value="GPI TRANSAMIDASE COMPONENT PIG-S"/>
    <property type="match status" value="1"/>
</dbReference>
<dbReference type="Pfam" id="PF10510">
    <property type="entry name" value="PIG-S"/>
    <property type="match status" value="1"/>
</dbReference>
<comment type="function">
    <text evidence="1">Component of the GPI transamidase complex. Involved in transfer of GPI to proteins (By similarity).</text>
</comment>
<comment type="pathway">
    <text>Glycolipid biosynthesis; glycosylphosphatidylinositol-anchor biosynthesis.</text>
</comment>
<comment type="subunit">
    <text evidence="1">Forms a complex with PIG-T homolog, PIG-U homolog and GPI8.</text>
</comment>
<comment type="subcellular location">
    <subcellularLocation>
        <location evidence="3">Endoplasmic reticulum membrane</location>
        <topology evidence="3">Multi-pass membrane protein</topology>
    </subcellularLocation>
</comment>
<comment type="similarity">
    <text evidence="4">Belongs to the PIGS family.</text>
</comment>